<reference key="1">
    <citation type="journal article" date="2005" name="J. Bacteriol.">
        <title>Insights on evolution of virulence and resistance from the complete genome analysis of an early methicillin-resistant Staphylococcus aureus strain and a biofilm-producing methicillin-resistant Staphylococcus epidermidis strain.</title>
        <authorList>
            <person name="Gill S.R."/>
            <person name="Fouts D.E."/>
            <person name="Archer G.L."/>
            <person name="Mongodin E.F."/>
            <person name="DeBoy R.T."/>
            <person name="Ravel J."/>
            <person name="Paulsen I.T."/>
            <person name="Kolonay J.F."/>
            <person name="Brinkac L.M."/>
            <person name="Beanan M.J."/>
            <person name="Dodson R.J."/>
            <person name="Daugherty S.C."/>
            <person name="Madupu R."/>
            <person name="Angiuoli S.V."/>
            <person name="Durkin A.S."/>
            <person name="Haft D.H."/>
            <person name="Vamathevan J.J."/>
            <person name="Khouri H."/>
            <person name="Utterback T.R."/>
            <person name="Lee C."/>
            <person name="Dimitrov G."/>
            <person name="Jiang L."/>
            <person name="Qin H."/>
            <person name="Weidman J."/>
            <person name="Tran K."/>
            <person name="Kang K.H."/>
            <person name="Hance I.R."/>
            <person name="Nelson K.E."/>
            <person name="Fraser C.M."/>
        </authorList>
    </citation>
    <scope>NUCLEOTIDE SEQUENCE [LARGE SCALE GENOMIC DNA]</scope>
    <source>
        <strain>COL</strain>
    </source>
</reference>
<evidence type="ECO:0000255" key="1">
    <source>
        <dbReference type="HAMAP-Rule" id="MF_01574"/>
    </source>
</evidence>
<name>LACG_STAAC</name>
<accession>Q5HE16</accession>
<keyword id="KW-0326">Glycosidase</keyword>
<keyword id="KW-0378">Hydrolase</keyword>
<organism>
    <name type="scientific">Staphylococcus aureus (strain COL)</name>
    <dbReference type="NCBI Taxonomy" id="93062"/>
    <lineage>
        <taxon>Bacteria</taxon>
        <taxon>Bacillati</taxon>
        <taxon>Bacillota</taxon>
        <taxon>Bacilli</taxon>
        <taxon>Bacillales</taxon>
        <taxon>Staphylococcaceae</taxon>
        <taxon>Staphylococcus</taxon>
    </lineage>
</organism>
<sequence length="470" mass="54551">MTKTLPEDFIFGGATAAYQAEGATNTDGKGRVAWDTYLEENYWYTAEPASDFYDRYPVDLELSEKFGVNGIRISIAWSRIFPNGYGEVNPKGVEYYHKLFAECHKRHVEPFVTLHHFDTPEVLHKDGDFLNRKTIDYFVDYAEYCFKEFPEVKYWTTFNEIGPIGDGQYLVGKFPPGIKYDFEKVFQSHHNMMVAHARAVKLFKDGGYKGEIGVVHALPTKYPFDPSNPEDVRAAELEDIIHNKFILDATYLGKYSRETMEGVQHILSVNGGKLNITDEDYAILDAAKDLNDFLGINYYMSDWMRGYDGESEITHNATGDKGGSKYQLKGVGQREFDVDVPRTDWDWMIYPQGLYDQIMRVVKDYPNYHKIYITENGLGYKDEFIESEKTVHDDARIDYVRQHLNVIADAIIDGANVKGYFIWSLMDVFSWSNGYEKRYGLFYVDFETQERYPKKSAYWYKELAETKEIK</sequence>
<feature type="chain" id="PRO_0000063884" description="6-phospho-beta-galactosidase">
    <location>
        <begin position="1"/>
        <end position="470"/>
    </location>
</feature>
<feature type="active site" description="Proton donor" evidence="1">
    <location>
        <position position="160"/>
    </location>
</feature>
<feature type="active site" description="Nucleophile" evidence="1">
    <location>
        <position position="375"/>
    </location>
</feature>
<feature type="binding site" evidence="1">
    <location>
        <position position="19"/>
    </location>
    <ligand>
        <name>D-galactose 6-phosphate</name>
        <dbReference type="ChEBI" id="CHEBI:91004"/>
    </ligand>
</feature>
<feature type="binding site" evidence="1">
    <location>
        <position position="116"/>
    </location>
    <ligand>
        <name>D-galactose 6-phosphate</name>
        <dbReference type="ChEBI" id="CHEBI:91004"/>
    </ligand>
</feature>
<feature type="binding site" evidence="1">
    <location>
        <position position="159"/>
    </location>
    <ligand>
        <name>D-galactose 6-phosphate</name>
        <dbReference type="ChEBI" id="CHEBI:91004"/>
    </ligand>
</feature>
<feature type="binding site" evidence="1">
    <location>
        <position position="160"/>
    </location>
    <ligand>
        <name>D-galactose 6-phosphate</name>
        <dbReference type="ChEBI" id="CHEBI:91004"/>
    </ligand>
</feature>
<feature type="binding site" evidence="1">
    <location>
        <position position="297"/>
    </location>
    <ligand>
        <name>D-galactose 6-phosphate</name>
        <dbReference type="ChEBI" id="CHEBI:91004"/>
    </ligand>
</feature>
<feature type="binding site" evidence="1">
    <location>
        <position position="430"/>
    </location>
    <ligand>
        <name>D-galactose 6-phosphate</name>
        <dbReference type="ChEBI" id="CHEBI:91004"/>
    </ligand>
</feature>
<feature type="binding site" evidence="1">
    <location>
        <position position="431"/>
    </location>
    <ligand>
        <name>D-galactose 6-phosphate</name>
        <dbReference type="ChEBI" id="CHEBI:91004"/>
    </ligand>
</feature>
<feature type="binding site" evidence="1">
    <location>
        <position position="437"/>
    </location>
    <ligand>
        <name>D-galactose 6-phosphate</name>
        <dbReference type="ChEBI" id="CHEBI:91004"/>
    </ligand>
</feature>
<feature type="binding site" evidence="1">
    <location>
        <position position="439"/>
    </location>
    <ligand>
        <name>D-galactose 6-phosphate</name>
        <dbReference type="ChEBI" id="CHEBI:91004"/>
    </ligand>
</feature>
<comment type="catalytic activity">
    <reaction evidence="1">
        <text>a 6-phospho-beta-D-galactoside + H2O = D-galactose 6-phosphate + an alcohol</text>
        <dbReference type="Rhea" id="RHEA:24568"/>
        <dbReference type="ChEBI" id="CHEBI:15377"/>
        <dbReference type="ChEBI" id="CHEBI:30879"/>
        <dbReference type="ChEBI" id="CHEBI:58534"/>
        <dbReference type="ChEBI" id="CHEBI:91004"/>
        <dbReference type="EC" id="3.2.1.85"/>
    </reaction>
</comment>
<comment type="pathway">
    <text evidence="1">Carbohydrate metabolism; lactose degradation; D-galactose 6-phosphate and beta-D-glucose from lactose 6-phosphate: step 1/1.</text>
</comment>
<comment type="similarity">
    <text evidence="1">Belongs to the glycosyl hydrolase 1 family.</text>
</comment>
<gene>
    <name evidence="1" type="primary">lacG</name>
    <name type="ordered locus">SACOL2180</name>
</gene>
<proteinExistence type="inferred from homology"/>
<protein>
    <recommendedName>
        <fullName evidence="1">6-phospho-beta-galactosidase</fullName>
        <ecNumber evidence="1">3.2.1.85</ecNumber>
    </recommendedName>
    <alternativeName>
        <fullName evidence="1">Beta-D-phosphogalactoside galactohydrolase</fullName>
        <shortName evidence="1">PGALase</shortName>
    </alternativeName>
    <alternativeName>
        <fullName evidence="1">P-beta-Gal</fullName>
        <shortName evidence="1">PBG</shortName>
    </alternativeName>
</protein>
<dbReference type="EC" id="3.2.1.85" evidence="1"/>
<dbReference type="EMBL" id="CP000046">
    <property type="protein sequence ID" value="AAW37056.1"/>
    <property type="molecule type" value="Genomic_DNA"/>
</dbReference>
<dbReference type="RefSeq" id="WP_000169210.1">
    <property type="nucleotide sequence ID" value="NC_002951.2"/>
</dbReference>
<dbReference type="SMR" id="Q5HE16"/>
<dbReference type="CAZy" id="GH1">
    <property type="family name" value="Glycoside Hydrolase Family 1"/>
</dbReference>
<dbReference type="KEGG" id="sac:SACOL2180"/>
<dbReference type="HOGENOM" id="CLU_001859_1_3_9"/>
<dbReference type="UniPathway" id="UPA00542">
    <property type="reaction ID" value="UER00605"/>
</dbReference>
<dbReference type="Proteomes" id="UP000000530">
    <property type="component" value="Chromosome"/>
</dbReference>
<dbReference type="GO" id="GO:0005829">
    <property type="term" value="C:cytosol"/>
    <property type="evidence" value="ECO:0007669"/>
    <property type="project" value="TreeGrafter"/>
</dbReference>
<dbReference type="GO" id="GO:0033920">
    <property type="term" value="F:6-phospho-beta-galactosidase activity"/>
    <property type="evidence" value="ECO:0007669"/>
    <property type="project" value="UniProtKB-UniRule"/>
</dbReference>
<dbReference type="GO" id="GO:0008422">
    <property type="term" value="F:beta-glucosidase activity"/>
    <property type="evidence" value="ECO:0007669"/>
    <property type="project" value="TreeGrafter"/>
</dbReference>
<dbReference type="GO" id="GO:0019512">
    <property type="term" value="P:lactose catabolic process via tagatose-6-phosphate"/>
    <property type="evidence" value="ECO:0007669"/>
    <property type="project" value="InterPro"/>
</dbReference>
<dbReference type="FunFam" id="3.20.20.80:FF:000004">
    <property type="entry name" value="Beta-glucosidase 6-phospho-beta-glucosidase"/>
    <property type="match status" value="1"/>
</dbReference>
<dbReference type="Gene3D" id="3.20.20.80">
    <property type="entry name" value="Glycosidases"/>
    <property type="match status" value="1"/>
</dbReference>
<dbReference type="HAMAP" id="MF_01574">
    <property type="entry name" value="LacG"/>
    <property type="match status" value="1"/>
</dbReference>
<dbReference type="InterPro" id="IPR005928">
    <property type="entry name" value="6P-beta-galactosidase"/>
</dbReference>
<dbReference type="InterPro" id="IPR001360">
    <property type="entry name" value="Glyco_hydro_1"/>
</dbReference>
<dbReference type="InterPro" id="IPR018120">
    <property type="entry name" value="Glyco_hydro_1_AS"/>
</dbReference>
<dbReference type="InterPro" id="IPR033132">
    <property type="entry name" value="Glyco_hydro_1_N_CS"/>
</dbReference>
<dbReference type="InterPro" id="IPR017853">
    <property type="entry name" value="Glycoside_hydrolase_SF"/>
</dbReference>
<dbReference type="NCBIfam" id="TIGR01233">
    <property type="entry name" value="lacG"/>
    <property type="match status" value="1"/>
</dbReference>
<dbReference type="NCBIfam" id="NF010036">
    <property type="entry name" value="PRK13511.1"/>
    <property type="match status" value="1"/>
</dbReference>
<dbReference type="PANTHER" id="PTHR10353">
    <property type="entry name" value="GLYCOSYL HYDROLASE"/>
    <property type="match status" value="1"/>
</dbReference>
<dbReference type="PANTHER" id="PTHR10353:SF36">
    <property type="entry name" value="LP05116P"/>
    <property type="match status" value="1"/>
</dbReference>
<dbReference type="Pfam" id="PF00232">
    <property type="entry name" value="Glyco_hydro_1"/>
    <property type="match status" value="1"/>
</dbReference>
<dbReference type="PRINTS" id="PR00131">
    <property type="entry name" value="GLHYDRLASE1"/>
</dbReference>
<dbReference type="SUPFAM" id="SSF51445">
    <property type="entry name" value="(Trans)glycosidases"/>
    <property type="match status" value="1"/>
</dbReference>
<dbReference type="PROSITE" id="PS00572">
    <property type="entry name" value="GLYCOSYL_HYDROL_F1_1"/>
    <property type="match status" value="1"/>
</dbReference>
<dbReference type="PROSITE" id="PS00653">
    <property type="entry name" value="GLYCOSYL_HYDROL_F1_2"/>
    <property type="match status" value="1"/>
</dbReference>